<protein>
    <recommendedName>
        <fullName evidence="1">DNA replication and repair protein RecF</fullName>
    </recommendedName>
</protein>
<name>RECF_RIPO1</name>
<comment type="function">
    <text evidence="1">The RecF protein is involved in DNA metabolism; it is required for DNA replication and normal SOS inducibility. RecF binds preferentially to single-stranded, linear DNA. It also seems to bind ATP.</text>
</comment>
<comment type="subcellular location">
    <subcellularLocation>
        <location evidence="1">Cytoplasm</location>
    </subcellularLocation>
</comment>
<comment type="similarity">
    <text evidence="1">Belongs to the RecF family.</text>
</comment>
<evidence type="ECO:0000255" key="1">
    <source>
        <dbReference type="HAMAP-Rule" id="MF_00365"/>
    </source>
</evidence>
<keyword id="KW-0067">ATP-binding</keyword>
<keyword id="KW-0963">Cytoplasm</keyword>
<keyword id="KW-0227">DNA damage</keyword>
<keyword id="KW-0234">DNA repair</keyword>
<keyword id="KW-0235">DNA replication</keyword>
<keyword id="KW-0238">DNA-binding</keyword>
<keyword id="KW-0547">Nucleotide-binding</keyword>
<keyword id="KW-1185">Reference proteome</keyword>
<keyword id="KW-0742">SOS response</keyword>
<accession>B7K127</accession>
<gene>
    <name evidence="1" type="primary">recF</name>
    <name type="ordered locus">PCC8801_1094</name>
</gene>
<proteinExistence type="inferred from homology"/>
<feature type="chain" id="PRO_1000121106" description="DNA replication and repair protein RecF">
    <location>
        <begin position="1"/>
        <end position="380"/>
    </location>
</feature>
<feature type="binding site" evidence="1">
    <location>
        <begin position="30"/>
        <end position="37"/>
    </location>
    <ligand>
        <name>ATP</name>
        <dbReference type="ChEBI" id="CHEBI:30616"/>
    </ligand>
</feature>
<organism>
    <name type="scientific">Rippkaea orientalis (strain PCC 8801 / RF-1)</name>
    <name type="common">Cyanothece sp. (strain PCC 8801)</name>
    <dbReference type="NCBI Taxonomy" id="41431"/>
    <lineage>
        <taxon>Bacteria</taxon>
        <taxon>Bacillati</taxon>
        <taxon>Cyanobacteriota</taxon>
        <taxon>Cyanophyceae</taxon>
        <taxon>Oscillatoriophycideae</taxon>
        <taxon>Chroococcales</taxon>
        <taxon>Aphanothecaceae</taxon>
        <taxon>Rippkaea</taxon>
        <taxon>Rippkaea orientalis</taxon>
    </lineage>
</organism>
<reference key="1">
    <citation type="journal article" date="2011" name="MBio">
        <title>Novel metabolic attributes of the genus Cyanothece, comprising a group of unicellular nitrogen-fixing Cyanobacteria.</title>
        <authorList>
            <person name="Bandyopadhyay A."/>
            <person name="Elvitigala T."/>
            <person name="Welsh E."/>
            <person name="Stockel J."/>
            <person name="Liberton M."/>
            <person name="Min H."/>
            <person name="Sherman L.A."/>
            <person name="Pakrasi H.B."/>
        </authorList>
    </citation>
    <scope>NUCLEOTIDE SEQUENCE [LARGE SCALE GENOMIC DNA]</scope>
    <source>
        <strain>PCC 8801 / RF-1</strain>
    </source>
</reference>
<dbReference type="EMBL" id="CP001287">
    <property type="protein sequence ID" value="ACK65168.1"/>
    <property type="molecule type" value="Genomic_DNA"/>
</dbReference>
<dbReference type="RefSeq" id="WP_012594443.1">
    <property type="nucleotide sequence ID" value="NC_011726.1"/>
</dbReference>
<dbReference type="SMR" id="B7K127"/>
<dbReference type="STRING" id="41431.PCC8801_1094"/>
<dbReference type="KEGG" id="cyp:PCC8801_1094"/>
<dbReference type="eggNOG" id="COG1195">
    <property type="taxonomic scope" value="Bacteria"/>
</dbReference>
<dbReference type="HOGENOM" id="CLU_040267_0_1_3"/>
<dbReference type="OrthoDB" id="9803889at2"/>
<dbReference type="Proteomes" id="UP000008204">
    <property type="component" value="Chromosome"/>
</dbReference>
<dbReference type="GO" id="GO:0005737">
    <property type="term" value="C:cytoplasm"/>
    <property type="evidence" value="ECO:0007669"/>
    <property type="project" value="UniProtKB-SubCell"/>
</dbReference>
<dbReference type="GO" id="GO:0005524">
    <property type="term" value="F:ATP binding"/>
    <property type="evidence" value="ECO:0007669"/>
    <property type="project" value="UniProtKB-UniRule"/>
</dbReference>
<dbReference type="GO" id="GO:0003697">
    <property type="term" value="F:single-stranded DNA binding"/>
    <property type="evidence" value="ECO:0007669"/>
    <property type="project" value="UniProtKB-UniRule"/>
</dbReference>
<dbReference type="GO" id="GO:0006260">
    <property type="term" value="P:DNA replication"/>
    <property type="evidence" value="ECO:0007669"/>
    <property type="project" value="UniProtKB-UniRule"/>
</dbReference>
<dbReference type="GO" id="GO:0000731">
    <property type="term" value="P:DNA synthesis involved in DNA repair"/>
    <property type="evidence" value="ECO:0007669"/>
    <property type="project" value="TreeGrafter"/>
</dbReference>
<dbReference type="GO" id="GO:0006302">
    <property type="term" value="P:double-strand break repair"/>
    <property type="evidence" value="ECO:0007669"/>
    <property type="project" value="TreeGrafter"/>
</dbReference>
<dbReference type="GO" id="GO:0009432">
    <property type="term" value="P:SOS response"/>
    <property type="evidence" value="ECO:0007669"/>
    <property type="project" value="UniProtKB-UniRule"/>
</dbReference>
<dbReference type="CDD" id="cd03242">
    <property type="entry name" value="ABC_RecF"/>
    <property type="match status" value="1"/>
</dbReference>
<dbReference type="Gene3D" id="3.40.50.300">
    <property type="entry name" value="P-loop containing nucleotide triphosphate hydrolases"/>
    <property type="match status" value="1"/>
</dbReference>
<dbReference type="Gene3D" id="1.20.1050.90">
    <property type="entry name" value="RecF/RecN/SMC, N-terminal domain"/>
    <property type="match status" value="1"/>
</dbReference>
<dbReference type="HAMAP" id="MF_00365">
    <property type="entry name" value="RecF"/>
    <property type="match status" value="1"/>
</dbReference>
<dbReference type="InterPro" id="IPR001238">
    <property type="entry name" value="DNA-binding_RecF"/>
</dbReference>
<dbReference type="InterPro" id="IPR018078">
    <property type="entry name" value="DNA-binding_RecF_CS"/>
</dbReference>
<dbReference type="InterPro" id="IPR027417">
    <property type="entry name" value="P-loop_NTPase"/>
</dbReference>
<dbReference type="InterPro" id="IPR003395">
    <property type="entry name" value="RecF/RecN/SMC_N"/>
</dbReference>
<dbReference type="InterPro" id="IPR042174">
    <property type="entry name" value="RecF_2"/>
</dbReference>
<dbReference type="NCBIfam" id="TIGR00611">
    <property type="entry name" value="recf"/>
    <property type="match status" value="1"/>
</dbReference>
<dbReference type="PANTHER" id="PTHR32182">
    <property type="entry name" value="DNA REPLICATION AND REPAIR PROTEIN RECF"/>
    <property type="match status" value="1"/>
</dbReference>
<dbReference type="PANTHER" id="PTHR32182:SF0">
    <property type="entry name" value="DNA REPLICATION AND REPAIR PROTEIN RECF"/>
    <property type="match status" value="1"/>
</dbReference>
<dbReference type="Pfam" id="PF02463">
    <property type="entry name" value="SMC_N"/>
    <property type="match status" value="1"/>
</dbReference>
<dbReference type="SUPFAM" id="SSF52540">
    <property type="entry name" value="P-loop containing nucleoside triphosphate hydrolases"/>
    <property type="match status" value="1"/>
</dbReference>
<dbReference type="PROSITE" id="PS00617">
    <property type="entry name" value="RECF_1"/>
    <property type="match status" value="1"/>
</dbReference>
<dbReference type="PROSITE" id="PS00618">
    <property type="entry name" value="RECF_2"/>
    <property type="match status" value="1"/>
</dbReference>
<sequence length="380" mass="43618">MYLKTLHLSAFRNYREQQIEFDHQKTILLGNNAQGKSNVLEAVELLATLKSHRTNRDRDFILEGETIGQITAKIERNYGTSDLAITLRSPGRRTLTLNHEHLRRHLEFLGSLNAVQFSSLDLDLVRGSPDARRNWLDTLLVQLEPIYAHILQQYYQVLRQRNALLKDLRKTATEEGKSDHLSAQMTQLHLWDQQLAETGSRVTRRRARVIERLIPLAQIWHQNISGGQEILQIDYLPNVSWQEDEPLEVQQAFLAKIEQRRLAEQQLGTTVVGPHRDDVEFTINGTPAKSYGSQGQQRTLVLALKLAELKLIEEVIGEPPLLLLDDVLAELDPNRQNQLLEVIQGRFQTFITTTYLHSFDAQWLQSSQILKVEAGKIHPC</sequence>